<name>FMT_ANAPZ</name>
<sequence>MKVVFMGSSEFSLPAFEALVSADSYDVVAVYTKAPKPAGRGYALTKTPVHICAEGKGIPVRSPVSLRAEGEESIMAEYAPDVIVVVSYGLMLPKWTLTASRMGCVNIHPSLLPRWRGAAPMQHAILSGDTVTGVTIMQINEFMDAGDIYLQEVTEIGEKENILDLSRRLSVMGSRMLLKVLDSIGSIQPIKQDESGVTIANKLEEFRIDFEEAADVICRRIRALYPKMYFMLDGSRVRVLEAESYEFAEMNIGDVINNELHIRCGGNTALVPLVVQQESKKPCDIKSFLCRFRGKSMPVVS</sequence>
<proteinExistence type="inferred from homology"/>
<feature type="chain" id="PRO_1000020013" description="Methionyl-tRNA formyltransferase">
    <location>
        <begin position="1"/>
        <end position="301"/>
    </location>
</feature>
<feature type="binding site" evidence="1">
    <location>
        <begin position="110"/>
        <end position="113"/>
    </location>
    <ligand>
        <name>(6S)-5,6,7,8-tetrahydrofolate</name>
        <dbReference type="ChEBI" id="CHEBI:57453"/>
    </ligand>
</feature>
<reference key="1">
    <citation type="journal article" date="2006" name="PLoS Genet.">
        <title>Comparative genomics of emerging human ehrlichiosis agents.</title>
        <authorList>
            <person name="Dunning Hotopp J.C."/>
            <person name="Lin M."/>
            <person name="Madupu R."/>
            <person name="Crabtree J."/>
            <person name="Angiuoli S.V."/>
            <person name="Eisen J.A."/>
            <person name="Seshadri R."/>
            <person name="Ren Q."/>
            <person name="Wu M."/>
            <person name="Utterback T.R."/>
            <person name="Smith S."/>
            <person name="Lewis M."/>
            <person name="Khouri H."/>
            <person name="Zhang C."/>
            <person name="Niu H."/>
            <person name="Lin Q."/>
            <person name="Ohashi N."/>
            <person name="Zhi N."/>
            <person name="Nelson W.C."/>
            <person name="Brinkac L.M."/>
            <person name="Dodson R.J."/>
            <person name="Rosovitz M.J."/>
            <person name="Sundaram J.P."/>
            <person name="Daugherty S.C."/>
            <person name="Davidsen T."/>
            <person name="Durkin A.S."/>
            <person name="Gwinn M.L."/>
            <person name="Haft D.H."/>
            <person name="Selengut J.D."/>
            <person name="Sullivan S.A."/>
            <person name="Zafar N."/>
            <person name="Zhou L."/>
            <person name="Benahmed F."/>
            <person name="Forberger H."/>
            <person name="Halpin R."/>
            <person name="Mulligan S."/>
            <person name="Robinson J."/>
            <person name="White O."/>
            <person name="Rikihisa Y."/>
            <person name="Tettelin H."/>
        </authorList>
    </citation>
    <scope>NUCLEOTIDE SEQUENCE [LARGE SCALE GENOMIC DNA]</scope>
    <source>
        <strain>HZ</strain>
    </source>
</reference>
<protein>
    <recommendedName>
        <fullName evidence="1">Methionyl-tRNA formyltransferase</fullName>
        <ecNumber evidence="1">2.1.2.9</ecNumber>
    </recommendedName>
</protein>
<keyword id="KW-0648">Protein biosynthesis</keyword>
<keyword id="KW-0808">Transferase</keyword>
<organism>
    <name type="scientific">Anaplasma phagocytophilum (strain HZ)</name>
    <dbReference type="NCBI Taxonomy" id="212042"/>
    <lineage>
        <taxon>Bacteria</taxon>
        <taxon>Pseudomonadati</taxon>
        <taxon>Pseudomonadota</taxon>
        <taxon>Alphaproteobacteria</taxon>
        <taxon>Rickettsiales</taxon>
        <taxon>Anaplasmataceae</taxon>
        <taxon>Anaplasma</taxon>
        <taxon>phagocytophilum group</taxon>
    </lineage>
</organism>
<accession>Q2GJB8</accession>
<comment type="function">
    <text evidence="1">Attaches a formyl group to the free amino group of methionyl-tRNA(fMet). The formyl group appears to play a dual role in the initiator identity of N-formylmethionyl-tRNA by promoting its recognition by IF2 and preventing the misappropriation of this tRNA by the elongation apparatus.</text>
</comment>
<comment type="catalytic activity">
    <reaction evidence="1">
        <text>L-methionyl-tRNA(fMet) + (6R)-10-formyltetrahydrofolate = N-formyl-L-methionyl-tRNA(fMet) + (6S)-5,6,7,8-tetrahydrofolate + H(+)</text>
        <dbReference type="Rhea" id="RHEA:24380"/>
        <dbReference type="Rhea" id="RHEA-COMP:9952"/>
        <dbReference type="Rhea" id="RHEA-COMP:9953"/>
        <dbReference type="ChEBI" id="CHEBI:15378"/>
        <dbReference type="ChEBI" id="CHEBI:57453"/>
        <dbReference type="ChEBI" id="CHEBI:78530"/>
        <dbReference type="ChEBI" id="CHEBI:78844"/>
        <dbReference type="ChEBI" id="CHEBI:195366"/>
        <dbReference type="EC" id="2.1.2.9"/>
    </reaction>
</comment>
<comment type="similarity">
    <text evidence="1">Belongs to the Fmt family.</text>
</comment>
<evidence type="ECO:0000255" key="1">
    <source>
        <dbReference type="HAMAP-Rule" id="MF_00182"/>
    </source>
</evidence>
<dbReference type="EC" id="2.1.2.9" evidence="1"/>
<dbReference type="EMBL" id="CP000235">
    <property type="protein sequence ID" value="ABD43983.1"/>
    <property type="molecule type" value="Genomic_DNA"/>
</dbReference>
<dbReference type="RefSeq" id="WP_011451046.1">
    <property type="nucleotide sequence ID" value="NC_007797.1"/>
</dbReference>
<dbReference type="SMR" id="Q2GJB8"/>
<dbReference type="STRING" id="212042.APH_0965"/>
<dbReference type="PaxDb" id="212042-APH_0965"/>
<dbReference type="EnsemblBacteria" id="ABD43983">
    <property type="protein sequence ID" value="ABD43983"/>
    <property type="gene ID" value="APH_0965"/>
</dbReference>
<dbReference type="GeneID" id="92748088"/>
<dbReference type="KEGG" id="aph:APH_0965"/>
<dbReference type="eggNOG" id="COG0223">
    <property type="taxonomic scope" value="Bacteria"/>
</dbReference>
<dbReference type="HOGENOM" id="CLU_033347_1_1_5"/>
<dbReference type="Proteomes" id="UP000001943">
    <property type="component" value="Chromosome"/>
</dbReference>
<dbReference type="GO" id="GO:0004479">
    <property type="term" value="F:methionyl-tRNA formyltransferase activity"/>
    <property type="evidence" value="ECO:0007669"/>
    <property type="project" value="UniProtKB-UniRule"/>
</dbReference>
<dbReference type="CDD" id="cd08646">
    <property type="entry name" value="FMT_core_Met-tRNA-FMT_N"/>
    <property type="match status" value="1"/>
</dbReference>
<dbReference type="CDD" id="cd08704">
    <property type="entry name" value="Met_tRNA_FMT_C"/>
    <property type="match status" value="1"/>
</dbReference>
<dbReference type="Gene3D" id="3.40.50.12230">
    <property type="match status" value="1"/>
</dbReference>
<dbReference type="HAMAP" id="MF_00182">
    <property type="entry name" value="Formyl_trans"/>
    <property type="match status" value="1"/>
</dbReference>
<dbReference type="InterPro" id="IPR005794">
    <property type="entry name" value="Fmt"/>
</dbReference>
<dbReference type="InterPro" id="IPR005793">
    <property type="entry name" value="Formyl_trans_C"/>
</dbReference>
<dbReference type="InterPro" id="IPR002376">
    <property type="entry name" value="Formyl_transf_N"/>
</dbReference>
<dbReference type="InterPro" id="IPR036477">
    <property type="entry name" value="Formyl_transf_N_sf"/>
</dbReference>
<dbReference type="InterPro" id="IPR011034">
    <property type="entry name" value="Formyl_transferase-like_C_sf"/>
</dbReference>
<dbReference type="InterPro" id="IPR044135">
    <property type="entry name" value="Met-tRNA-FMT_C"/>
</dbReference>
<dbReference type="InterPro" id="IPR041711">
    <property type="entry name" value="Met-tRNA-FMT_N"/>
</dbReference>
<dbReference type="NCBIfam" id="TIGR00460">
    <property type="entry name" value="fmt"/>
    <property type="match status" value="1"/>
</dbReference>
<dbReference type="PANTHER" id="PTHR11138">
    <property type="entry name" value="METHIONYL-TRNA FORMYLTRANSFERASE"/>
    <property type="match status" value="1"/>
</dbReference>
<dbReference type="PANTHER" id="PTHR11138:SF5">
    <property type="entry name" value="METHIONYL-TRNA FORMYLTRANSFERASE, MITOCHONDRIAL"/>
    <property type="match status" value="1"/>
</dbReference>
<dbReference type="Pfam" id="PF02911">
    <property type="entry name" value="Formyl_trans_C"/>
    <property type="match status" value="1"/>
</dbReference>
<dbReference type="Pfam" id="PF00551">
    <property type="entry name" value="Formyl_trans_N"/>
    <property type="match status" value="1"/>
</dbReference>
<dbReference type="SUPFAM" id="SSF50486">
    <property type="entry name" value="FMT C-terminal domain-like"/>
    <property type="match status" value="1"/>
</dbReference>
<dbReference type="SUPFAM" id="SSF53328">
    <property type="entry name" value="Formyltransferase"/>
    <property type="match status" value="1"/>
</dbReference>
<gene>
    <name evidence="1" type="primary">fmt</name>
    <name type="ordered locus">APH_0965</name>
</gene>